<organismHost>
    <name type="scientific">Equus asinus</name>
    <name type="common">Donkey</name>
    <name type="synonym">Equus africanus asinus</name>
    <dbReference type="NCBI Taxonomy" id="9793"/>
</organismHost>
<organismHost>
    <name type="scientific">Equus caballus</name>
    <name type="common">Horse</name>
    <dbReference type="NCBI Taxonomy" id="9796"/>
</organismHost>
<proteinExistence type="evidence at protein level"/>
<keyword id="KW-0165">Cleavage on pair of basic residues</keyword>
<keyword id="KW-0175">Coiled coil</keyword>
<keyword id="KW-0903">Direct protein sequencing</keyword>
<keyword id="KW-1015">Disulfide bond</keyword>
<keyword id="KW-0325">Glycoprotein</keyword>
<keyword id="KW-1032">Host cell membrane</keyword>
<keyword id="KW-1043">Host membrane</keyword>
<keyword id="KW-0945">Host-virus interaction</keyword>
<keyword id="KW-0472">Membrane</keyword>
<keyword id="KW-0812">Transmembrane</keyword>
<keyword id="KW-1133">Transmembrane helix</keyword>
<keyword id="KW-1161">Viral attachment to host cell</keyword>
<keyword id="KW-0261">Viral envelope protein</keyword>
<keyword id="KW-0946">Virion</keyword>
<keyword id="KW-1160">Virus entry into host cell</keyword>
<feature type="propeptide" id="PRO_0000239524" evidence="4">
    <location>
        <begin position="1"/>
        <end position="6"/>
    </location>
</feature>
<feature type="chain" id="PRO_0000038693" description="Envelope glycoprotein">
    <location>
        <begin position="7"/>
        <end position="859"/>
    </location>
</feature>
<feature type="chain" id="PRO_0000038694" description="Surface protein">
    <location>
        <begin position="7"/>
        <end position="444"/>
    </location>
</feature>
<feature type="chain" id="PRO_0000038695" description="Transmembrane protein">
    <location>
        <begin position="445"/>
        <end position="859"/>
    </location>
</feature>
<feature type="topological domain" description="Extracellular" evidence="2">
    <location>
        <begin position="7"/>
        <end position="614"/>
    </location>
</feature>
<feature type="transmembrane region" description="Helical" evidence="2">
    <location>
        <begin position="615"/>
        <end position="635"/>
    </location>
</feature>
<feature type="topological domain" description="Cytoplasmic" evidence="2">
    <location>
        <begin position="636"/>
        <end position="859"/>
    </location>
</feature>
<feature type="region of interest" description="Disordered" evidence="3">
    <location>
        <begin position="47"/>
        <end position="66"/>
    </location>
</feature>
<feature type="region of interest" description="Fusion peptide" evidence="2">
    <location>
        <begin position="446"/>
        <end position="466"/>
    </location>
</feature>
<feature type="region of interest" description="Immunosuppression" evidence="1">
    <location>
        <begin position="498"/>
        <end position="513"/>
    </location>
</feature>
<feature type="coiled-coil region" evidence="2">
    <location>
        <begin position="576"/>
        <end position="624"/>
    </location>
</feature>
<feature type="coiled-coil region" evidence="2">
    <location>
        <begin position="663"/>
        <end position="699"/>
    </location>
</feature>
<feature type="compositionally biased region" description="Basic and acidic residues" evidence="3">
    <location>
        <begin position="48"/>
        <end position="66"/>
    </location>
</feature>
<feature type="site" description="Cleavage; by host" evidence="1">
    <location>
        <begin position="444"/>
        <end position="445"/>
    </location>
</feature>
<feature type="site" description="Cleavage">
    <location>
        <begin position="684"/>
        <end position="685"/>
    </location>
</feature>
<feature type="glycosylation site" description="N-linked (GlcNAc...) asparagine; by host" evidence="2">
    <location>
        <position position="40"/>
    </location>
</feature>
<feature type="glycosylation site" description="N-linked (GlcNAc...) asparagine; by host" evidence="2">
    <location>
        <position position="112"/>
    </location>
</feature>
<feature type="glycosylation site" description="N-linked (GlcNAc...) asparagine; by host" evidence="2">
    <location>
        <position position="141"/>
    </location>
</feature>
<feature type="glycosylation site" description="N-linked (GlcNAc...) asparagine; by host" evidence="2">
    <location>
        <position position="148"/>
    </location>
</feature>
<feature type="glycosylation site" description="N-linked (GlcNAc...) asparagine; by host" evidence="2">
    <location>
        <position position="186"/>
    </location>
</feature>
<feature type="glycosylation site" description="N-linked (GlcNAc...) asparagine; by host" evidence="2">
    <location>
        <position position="214"/>
    </location>
</feature>
<feature type="glycosylation site" description="N-linked (GlcNAc...) asparagine; by host" evidence="2">
    <location>
        <position position="233"/>
    </location>
</feature>
<feature type="glycosylation site" description="N-linked (GlcNAc...) asparagine; by host" evidence="2">
    <location>
        <position position="244"/>
    </location>
</feature>
<feature type="glycosylation site" description="N-linked (GlcNAc...) asparagine; by host" evidence="2">
    <location>
        <position position="340"/>
    </location>
</feature>
<feature type="glycosylation site" description="N-linked (GlcNAc...) asparagine; by host" evidence="2">
    <location>
        <position position="368"/>
    </location>
</feature>
<feature type="glycosylation site" description="N-linked (GlcNAc...) asparagine; by host" evidence="2">
    <location>
        <position position="399"/>
    </location>
</feature>
<feature type="glycosylation site" description="N-linked (GlcNAc...) asparagine; by host" evidence="2">
    <location>
        <position position="406"/>
    </location>
</feature>
<feature type="glycosylation site" description="N-linked (GlcNAc...) asparagine; by host" evidence="2">
    <location>
        <position position="411"/>
    </location>
</feature>
<feature type="glycosylation site" description="N-linked (GlcNAc...) asparagine; by host" evidence="2">
    <location>
        <position position="483"/>
    </location>
</feature>
<feature type="glycosylation site" description="N-linked (GlcNAc...) asparagine; by host" evidence="2">
    <location>
        <position position="490"/>
    </location>
</feature>
<feature type="glycosylation site" description="N-linked (GlcNAc...) asparagine; by host" evidence="2">
    <location>
        <position position="550"/>
    </location>
</feature>
<feature type="glycosylation site" description="N-linked (GlcNAc...) asparagine; by host" evidence="2">
    <location>
        <position position="557"/>
    </location>
</feature>
<protein>
    <recommendedName>
        <fullName>Envelope glycoprotein</fullName>
    </recommendedName>
    <alternativeName>
        <fullName>Env polyprotein</fullName>
    </alternativeName>
    <component>
        <recommendedName>
            <fullName>Surface protein</fullName>
            <shortName>SU</shortName>
        </recommendedName>
        <alternativeName>
            <fullName>Glycoprotein 90</fullName>
            <shortName>gp90</shortName>
        </alternativeName>
    </component>
    <component>
        <recommendedName>
            <fullName>Transmembrane protein</fullName>
            <shortName>TM</shortName>
        </recommendedName>
        <alternativeName>
            <fullName>Glycoprotein 45</fullName>
            <shortName>gp45</shortName>
        </alternativeName>
    </component>
</protein>
<evidence type="ECO:0000250" key="1"/>
<evidence type="ECO:0000255" key="2"/>
<evidence type="ECO:0000256" key="3">
    <source>
        <dbReference type="SAM" id="MobiDB-lite"/>
    </source>
</evidence>
<evidence type="ECO:0000269" key="4">
    <source>
    </source>
</evidence>
<sequence length="859" mass="97140">MVSIAFYGGIPGGISTPITQQSEKSKCEENTMFQPYCYNNDSKNSMAESKEARDQEMNLKEESKEEKRRNDWWKKGMFLLCLAGTTGGILWWYEGLPQQHYIGLVAIGGRLNGSGQSNAIECWGSFPGCRPFQNYFSYETNRSMHMDNNTATLLEAYHREITFIYKSSCTDSDHCQEYQCKKVNLNSSDSSNSVRVEDVTNTAEYWGFKWLECNQTENFKTILVPENEMVNINDTDTWIPKGCNETWARVKRCPIDILYGIHPIRLCVQPPFFLVQEKGIADTSRIGNCGPTIFLGVLEDNKGVVRGDYIACNVRRLNINRKDYTGIYQVPIFYTCTFTNITSCNNEPIISVIMYETNQVQYLLCNNNNSNNYNCVVQSFGVIGQAHLELPRPNKRIRNQSFNQYNCSINNKTELETWKLVKTSGVTPLPISSEANTGLIRHKRDFGISAIVAAIVAATAIAASATMSYVALTEVNKIMEVQNHTFEVENSTLNGMDLIERQIKILYAMILQTHADVQLLKERQQVEETFNLIGCIERTHVFCHTGHPWNMSWGHLNESTQWDDWVSKMEDLNQEILTTLHGARNNLAQSMITFNTPDSIAQFGKDLWSHIGNWIPGLGASIIKYIVMFLLIYLLLTSSPKILRALWKVTSGAGSSGSRYLKKKFHHKHASREDTWDQAQHNIHLAGVTGGSGDKYYKQKYSRNDWNGESEEYNRRPKSWVKSIEAFGESYISEKTKGEISQPGAAINEHKNGSGGNNPHQGSLDLEIRSEGGNIYDCCIKAQEGTLAIPCCGFPLWLFWGLVIIVGRIAGYGLRGLAVIIRICIRGLNLIFEIIRKMLDYIGRALNPGTSHVSMPQYV</sequence>
<comment type="function">
    <text evidence="1">The surface protein (SU) attaches the virus to the host cell by binding to its receptor. This interaction triggers the refolding of the transmembrane protein (TM) and is thought to activate its fusogenic potential by unmasking its fusion peptide. Fusion occurs at the host cell plasma membrane (By similarity).</text>
</comment>
<comment type="function">
    <text evidence="1">The transmembrane protein (TM) acts as a class I viral fusion protein. Under the current model, the protein has at least 3 conformational states: pre-fusion native state, pre-hairpin intermediate state, and post-fusion hairpin state. During viral and target cell membrane fusion, the coiled coil regions (heptad repeats) assume a trimer-of-hairpins structure, positioning the fusion peptide in close proximity to the C-terminal region of the ectodomain. The formation of this structure appears to drive apposition and subsequent fusion of viral and target cell membranes. Membranes fusion leads to delivery of the nucleocapsid into the cytoplasm (By similarity).</text>
</comment>
<comment type="subunit">
    <text evidence="1">The mature envelope protein (Env) consists of a trimer of SU-TM heterodimers attached by noncovalent interactions or by a labile interchain disulfide bond.</text>
</comment>
<comment type="subcellular location">
    <molecule>Transmembrane protein</molecule>
    <subcellularLocation>
        <location evidence="1">Virion membrane</location>
        <topology evidence="1">Single-pass type I membrane protein</topology>
    </subcellularLocation>
    <subcellularLocation>
        <location evidence="1">Host cell membrane</location>
        <topology evidence="1">Single-pass type I membrane protein</topology>
    </subcellularLocation>
    <text evidence="1">It is probably concentrated at the site of budding and incorporated into the virions possibly by contacts between the cytoplasmic tail of Env and the N-terminus of Gag.</text>
</comment>
<comment type="subcellular location">
    <molecule>Surface protein</molecule>
    <subcellularLocation>
        <location evidence="1">Virion membrane</location>
        <topology evidence="1">Peripheral membrane protein</topology>
    </subcellularLocation>
    <subcellularLocation>
        <location evidence="1">Host cell membrane</location>
        <topology evidence="1">Peripheral membrane protein</topology>
    </subcellularLocation>
    <text evidence="1">The surface protein is not anchored to the viral envelope, but associates with the extravirion surface through its binding to TM. It is probably concentrated at the site of budding and incorporated into the virions possibly by contacts between the cytoplasmic tail of Env and the N-terminus of Gag (By similarity).</text>
</comment>
<comment type="PTM">
    <text evidence="1">Specific enzymatic cleavages in vivo yield mature proteins. Envelope glycoproteins are synthesized as an inactive precursor that is N-glycosylated and processed likely by host cell furin or by a furin-like protease in the Golgi to yield the mature SU and TM proteins. The cleavage site between SU and TM requires the minimal sequence [KR]-X-[KR]-R (By similarity).</text>
</comment>
<accession>P32541</accession>
<gene>
    <name type="primary">env</name>
</gene>
<reference key="1">
    <citation type="journal article" date="1992" name="J. Virol.">
        <title>The surface envelope protein gene region of equine infectious anemia virus is not an important determinant of tropism in vitro.</title>
        <authorList>
            <person name="Perry S.T."/>
            <person name="Flaherty M.T."/>
            <person name="Kelley M.J."/>
            <person name="Clabough D.L."/>
            <person name="Tronick S.R."/>
            <person name="Coggins L."/>
            <person name="Whetter L."/>
            <person name="Lengel C.R."/>
            <person name="Fuller F."/>
        </authorList>
    </citation>
    <scope>NUCLEOTIDE SEQUENCE [GENOMIC RNA]</scope>
</reference>
<reference key="2">
    <citation type="journal article" date="1988" name="Virology">
        <title>EIAV genomic organization: further characterization by sequencing of purified glycoproteins and cDNA.</title>
        <authorList>
            <person name="Ball J.M."/>
            <person name="Payne S.L."/>
            <person name="Issel C.J."/>
            <person name="Montelaro R.C."/>
        </authorList>
    </citation>
    <scope>PROTEIN SEQUENCE OF 7-24 AND 445-464</scope>
</reference>
<reference key="3">
    <citation type="journal article" date="1990" name="J. Virol.">
        <title>Synthesis and processing of the transmembrane envelope protein of equine infectious anemia virus.</title>
        <authorList>
            <person name="Rice N.R."/>
            <person name="Henderson L.E."/>
            <person name="Sowder R.C."/>
            <person name="Copeland T.D."/>
            <person name="Oroszlan S."/>
            <person name="Edwards J.F."/>
        </authorList>
    </citation>
    <scope>CLEAVAGE OF C-TERMINUS</scope>
</reference>
<dbReference type="EMBL" id="M87581">
    <property type="protein sequence ID" value="AAA43005.1"/>
    <property type="molecule type" value="Genomic_RNA"/>
</dbReference>
<dbReference type="PIR" id="C41991">
    <property type="entry name" value="VCLJ22"/>
</dbReference>
<dbReference type="GlyCosmos" id="P32541">
    <property type="glycosylation" value="17 sites, No reported glycans"/>
</dbReference>
<dbReference type="GO" id="GO:0020002">
    <property type="term" value="C:host cell plasma membrane"/>
    <property type="evidence" value="ECO:0007669"/>
    <property type="project" value="UniProtKB-SubCell"/>
</dbReference>
<dbReference type="GO" id="GO:0016020">
    <property type="term" value="C:membrane"/>
    <property type="evidence" value="ECO:0007669"/>
    <property type="project" value="UniProtKB-KW"/>
</dbReference>
<dbReference type="GO" id="GO:0019031">
    <property type="term" value="C:viral envelope"/>
    <property type="evidence" value="ECO:0007669"/>
    <property type="project" value="UniProtKB-KW"/>
</dbReference>
<dbReference type="GO" id="GO:0055036">
    <property type="term" value="C:virion membrane"/>
    <property type="evidence" value="ECO:0007669"/>
    <property type="project" value="UniProtKB-SubCell"/>
</dbReference>
<dbReference type="GO" id="GO:0005198">
    <property type="term" value="F:structural molecule activity"/>
    <property type="evidence" value="ECO:0007669"/>
    <property type="project" value="InterPro"/>
</dbReference>
<dbReference type="GO" id="GO:0046718">
    <property type="term" value="P:symbiont entry into host cell"/>
    <property type="evidence" value="ECO:0007669"/>
    <property type="project" value="UniProtKB-KW"/>
</dbReference>
<dbReference type="GO" id="GO:0019062">
    <property type="term" value="P:virion attachment to host cell"/>
    <property type="evidence" value="ECO:0007669"/>
    <property type="project" value="UniProtKB-KW"/>
</dbReference>
<dbReference type="CDD" id="cd09909">
    <property type="entry name" value="HIV-1-like_HR1-HR2"/>
    <property type="match status" value="1"/>
</dbReference>
<dbReference type="InterPro" id="IPR000328">
    <property type="entry name" value="GP41-like"/>
</dbReference>
<dbReference type="InterPro" id="IPR001361">
    <property type="entry name" value="Gp90_EIAV"/>
</dbReference>
<dbReference type="Pfam" id="PF00971">
    <property type="entry name" value="EIAV_GP90"/>
    <property type="match status" value="1"/>
</dbReference>
<dbReference type="Pfam" id="PF00517">
    <property type="entry name" value="GP41"/>
    <property type="match status" value="1"/>
</dbReference>
<name>ENV_EIAVC</name>
<organism>
    <name type="scientific">Equine infectious anemia virus (isolate CL22)</name>
    <name type="common">EIAV</name>
    <dbReference type="NCBI Taxonomy" id="31675"/>
    <lineage>
        <taxon>Viruses</taxon>
        <taxon>Riboviria</taxon>
        <taxon>Pararnavirae</taxon>
        <taxon>Artverviricota</taxon>
        <taxon>Revtraviricetes</taxon>
        <taxon>Ortervirales</taxon>
        <taxon>Retroviridae</taxon>
        <taxon>Orthoretrovirinae</taxon>
        <taxon>Lentivirus</taxon>
        <taxon>Equine infectious anemia virus</taxon>
    </lineage>
</organism>